<dbReference type="EC" id="3.5.1.9" evidence="1"/>
<dbReference type="EMBL" id="CP000958">
    <property type="protein sequence ID" value="ACA91762.1"/>
    <property type="molecule type" value="Genomic_DNA"/>
</dbReference>
<dbReference type="RefSeq" id="WP_012329112.1">
    <property type="nucleotide sequence ID" value="NC_010508.1"/>
</dbReference>
<dbReference type="SMR" id="B1JXI7"/>
<dbReference type="GeneID" id="83049388"/>
<dbReference type="KEGG" id="bcm:Bcenmc03_2601"/>
<dbReference type="HOGENOM" id="CLU_030671_3_1_4"/>
<dbReference type="UniPathway" id="UPA00333">
    <property type="reaction ID" value="UER00454"/>
</dbReference>
<dbReference type="Proteomes" id="UP000002169">
    <property type="component" value="Chromosome 1"/>
</dbReference>
<dbReference type="GO" id="GO:0004061">
    <property type="term" value="F:arylformamidase activity"/>
    <property type="evidence" value="ECO:0000250"/>
    <property type="project" value="UniProtKB"/>
</dbReference>
<dbReference type="GO" id="GO:0004328">
    <property type="term" value="F:formamidase activity"/>
    <property type="evidence" value="ECO:0007669"/>
    <property type="project" value="InterPro"/>
</dbReference>
<dbReference type="GO" id="GO:0008270">
    <property type="term" value="F:zinc ion binding"/>
    <property type="evidence" value="ECO:0007669"/>
    <property type="project" value="UniProtKB-UniRule"/>
</dbReference>
<dbReference type="GO" id="GO:0043420">
    <property type="term" value="P:anthranilate metabolic process"/>
    <property type="evidence" value="ECO:0000250"/>
    <property type="project" value="UniProtKB"/>
</dbReference>
<dbReference type="GO" id="GO:0019441">
    <property type="term" value="P:L-tryptophan catabolic process to kynurenine"/>
    <property type="evidence" value="ECO:0000250"/>
    <property type="project" value="UniProtKB"/>
</dbReference>
<dbReference type="FunFam" id="3.50.30.50:FF:000001">
    <property type="entry name" value="Kynurenine formamidase"/>
    <property type="match status" value="1"/>
</dbReference>
<dbReference type="Gene3D" id="3.50.30.50">
    <property type="entry name" value="Putative cyclase"/>
    <property type="match status" value="1"/>
</dbReference>
<dbReference type="HAMAP" id="MF_01969">
    <property type="entry name" value="KynB"/>
    <property type="match status" value="1"/>
</dbReference>
<dbReference type="InterPro" id="IPR007325">
    <property type="entry name" value="KFase/CYL"/>
</dbReference>
<dbReference type="InterPro" id="IPR037175">
    <property type="entry name" value="KFase_sf"/>
</dbReference>
<dbReference type="InterPro" id="IPR017484">
    <property type="entry name" value="Kynurenine_formamidase_bac"/>
</dbReference>
<dbReference type="NCBIfam" id="TIGR03035">
    <property type="entry name" value="trp_arylform"/>
    <property type="match status" value="1"/>
</dbReference>
<dbReference type="PANTHER" id="PTHR31118">
    <property type="entry name" value="CYCLASE-LIKE PROTEIN 2"/>
    <property type="match status" value="1"/>
</dbReference>
<dbReference type="PANTHER" id="PTHR31118:SF32">
    <property type="entry name" value="KYNURENINE FORMAMIDASE"/>
    <property type="match status" value="1"/>
</dbReference>
<dbReference type="Pfam" id="PF04199">
    <property type="entry name" value="Cyclase"/>
    <property type="match status" value="1"/>
</dbReference>
<dbReference type="SUPFAM" id="SSF102198">
    <property type="entry name" value="Putative cyclase"/>
    <property type="match status" value="1"/>
</dbReference>
<organism>
    <name type="scientific">Burkholderia orbicola (strain MC0-3)</name>
    <dbReference type="NCBI Taxonomy" id="406425"/>
    <lineage>
        <taxon>Bacteria</taxon>
        <taxon>Pseudomonadati</taxon>
        <taxon>Pseudomonadota</taxon>
        <taxon>Betaproteobacteria</taxon>
        <taxon>Burkholderiales</taxon>
        <taxon>Burkholderiaceae</taxon>
        <taxon>Burkholderia</taxon>
        <taxon>Burkholderia cepacia complex</taxon>
        <taxon>Burkholderia orbicola</taxon>
    </lineage>
</organism>
<gene>
    <name evidence="1" type="primary">kynB</name>
    <name type="ordered locus">Bcenmc03_2601</name>
</gene>
<feature type="chain" id="PRO_0000362101" description="Kynurenine formamidase">
    <location>
        <begin position="1"/>
        <end position="213"/>
    </location>
</feature>
<feature type="active site" description="Proton donor/acceptor" evidence="1">
    <location>
        <position position="58"/>
    </location>
</feature>
<feature type="binding site" evidence="1">
    <location>
        <position position="18"/>
    </location>
    <ligand>
        <name>substrate</name>
    </ligand>
</feature>
<feature type="binding site" evidence="1">
    <location>
        <position position="48"/>
    </location>
    <ligand>
        <name>Zn(2+)</name>
        <dbReference type="ChEBI" id="CHEBI:29105"/>
        <label>1</label>
    </ligand>
</feature>
<feature type="binding site" evidence="1">
    <location>
        <position position="52"/>
    </location>
    <ligand>
        <name>Zn(2+)</name>
        <dbReference type="ChEBI" id="CHEBI:29105"/>
        <label>1</label>
    </ligand>
</feature>
<feature type="binding site" evidence="1">
    <location>
        <position position="54"/>
    </location>
    <ligand>
        <name>Zn(2+)</name>
        <dbReference type="ChEBI" id="CHEBI:29105"/>
        <label>1</label>
    </ligand>
</feature>
<feature type="binding site" evidence="1">
    <location>
        <position position="54"/>
    </location>
    <ligand>
        <name>Zn(2+)</name>
        <dbReference type="ChEBI" id="CHEBI:29105"/>
        <label>2</label>
    </ligand>
</feature>
<feature type="binding site" evidence="1">
    <location>
        <position position="160"/>
    </location>
    <ligand>
        <name>Zn(2+)</name>
        <dbReference type="ChEBI" id="CHEBI:29105"/>
        <label>2</label>
    </ligand>
</feature>
<feature type="binding site" evidence="1">
    <location>
        <position position="172"/>
    </location>
    <ligand>
        <name>Zn(2+)</name>
        <dbReference type="ChEBI" id="CHEBI:29105"/>
        <label>1</label>
    </ligand>
</feature>
<feature type="binding site" evidence="1">
    <location>
        <position position="172"/>
    </location>
    <ligand>
        <name>Zn(2+)</name>
        <dbReference type="ChEBI" id="CHEBI:29105"/>
        <label>2</label>
    </ligand>
</feature>
<evidence type="ECO:0000255" key="1">
    <source>
        <dbReference type="HAMAP-Rule" id="MF_01969"/>
    </source>
</evidence>
<keyword id="KW-0378">Hydrolase</keyword>
<keyword id="KW-0479">Metal-binding</keyword>
<keyword id="KW-0823">Tryptophan catabolism</keyword>
<keyword id="KW-0862">Zinc</keyword>
<comment type="function">
    <text evidence="1">Catalyzes the hydrolysis of N-formyl-L-kynurenine to L-kynurenine, the second step in the kynurenine pathway of tryptophan degradation.</text>
</comment>
<comment type="catalytic activity">
    <reaction evidence="1">
        <text>N-formyl-L-kynurenine + H2O = L-kynurenine + formate + H(+)</text>
        <dbReference type="Rhea" id="RHEA:13009"/>
        <dbReference type="ChEBI" id="CHEBI:15377"/>
        <dbReference type="ChEBI" id="CHEBI:15378"/>
        <dbReference type="ChEBI" id="CHEBI:15740"/>
        <dbReference type="ChEBI" id="CHEBI:57959"/>
        <dbReference type="ChEBI" id="CHEBI:58629"/>
        <dbReference type="EC" id="3.5.1.9"/>
    </reaction>
</comment>
<comment type="cofactor">
    <cofactor evidence="1">
        <name>Zn(2+)</name>
        <dbReference type="ChEBI" id="CHEBI:29105"/>
    </cofactor>
    <text evidence="1">Binds 2 zinc ions per subunit.</text>
</comment>
<comment type="pathway">
    <text evidence="1">Amino-acid degradation; L-tryptophan degradation via kynurenine pathway; L-kynurenine from L-tryptophan: step 2/2.</text>
</comment>
<comment type="subunit">
    <text evidence="1">Homodimer.</text>
</comment>
<comment type="similarity">
    <text evidence="1">Belongs to the Cyclase 1 superfamily. KynB family.</text>
</comment>
<proteinExistence type="inferred from homology"/>
<reference key="1">
    <citation type="submission" date="2008-02" db="EMBL/GenBank/DDBJ databases">
        <title>Complete sequence of chromosome 1 of Burkholderia cenocepacia MC0-3.</title>
        <authorList>
            <person name="Copeland A."/>
            <person name="Lucas S."/>
            <person name="Lapidus A."/>
            <person name="Barry K."/>
            <person name="Bruce D."/>
            <person name="Goodwin L."/>
            <person name="Glavina del Rio T."/>
            <person name="Dalin E."/>
            <person name="Tice H."/>
            <person name="Pitluck S."/>
            <person name="Chain P."/>
            <person name="Malfatti S."/>
            <person name="Shin M."/>
            <person name="Vergez L."/>
            <person name="Schmutz J."/>
            <person name="Larimer F."/>
            <person name="Land M."/>
            <person name="Hauser L."/>
            <person name="Kyrpides N."/>
            <person name="Mikhailova N."/>
            <person name="Tiedje J."/>
            <person name="Richardson P."/>
        </authorList>
    </citation>
    <scope>NUCLEOTIDE SEQUENCE [LARGE SCALE GENOMIC DNA]</scope>
    <source>
        <strain>MC0-3</strain>
    </source>
</reference>
<name>KYNB_BURO0</name>
<sequence length="213" mass="22662">MDTLWDISPPVSPATPVWPGDTPVAVERVWRMEAGSPVNVARLTLSPHTGAHCDAPLHYDADGAPIGAVPLDTYLGPCRVIHCIGASPVVRPADVEVALDGVPPRVLLRTYARAAVEQWDSAFCAVAPDTVDLLAAHGVKLIGIDTPSLDPQESKTMDAHHRVRAHRMAILEGIVLDDVPPGDYELIALPLKFATLDASPVRAVLRALPAHAS</sequence>
<accession>B1JXI7</accession>
<protein>
    <recommendedName>
        <fullName evidence="1">Kynurenine formamidase</fullName>
        <shortName evidence="1">KFA</shortName>
        <shortName evidence="1">KFase</shortName>
        <ecNumber evidence="1">3.5.1.9</ecNumber>
    </recommendedName>
    <alternativeName>
        <fullName evidence="1">Arylformamidase</fullName>
    </alternativeName>
    <alternativeName>
        <fullName evidence="1">N-formylkynurenine formamidase</fullName>
        <shortName evidence="1">FKF</shortName>
    </alternativeName>
</protein>